<comment type="subcellular location">
    <subcellularLocation>
        <location evidence="3">Membrane</location>
        <topology evidence="3">Multi-pass membrane protein</topology>
    </subcellularLocation>
</comment>
<comment type="miscellaneous">
    <text evidence="2">Present with 981 molecules/cell in log phase SD medium.</text>
</comment>
<organism>
    <name type="scientific">Saccharomyces cerevisiae (strain ATCC 204508 / S288c)</name>
    <name type="common">Baker's yeast</name>
    <dbReference type="NCBI Taxonomy" id="559292"/>
    <lineage>
        <taxon>Eukaryota</taxon>
        <taxon>Fungi</taxon>
        <taxon>Dikarya</taxon>
        <taxon>Ascomycota</taxon>
        <taxon>Saccharomycotina</taxon>
        <taxon>Saccharomycetes</taxon>
        <taxon>Saccharomycetales</taxon>
        <taxon>Saccharomycetaceae</taxon>
        <taxon>Saccharomyces</taxon>
    </lineage>
</organism>
<keyword id="KW-0472">Membrane</keyword>
<keyword id="KW-1185">Reference proteome</keyword>
<keyword id="KW-0812">Transmembrane</keyword>
<keyword id="KW-1133">Transmembrane helix</keyword>
<protein>
    <recommendedName>
        <fullName>Uncharacterized protein YMR209C</fullName>
    </recommendedName>
</protein>
<gene>
    <name type="ordered locus">YMR209C</name>
    <name type="ORF">YM8261.03C</name>
</gene>
<name>YM59_YEAST</name>
<feature type="chain" id="PRO_0000203330" description="Uncharacterized protein YMR209C">
    <location>
        <begin position="1"/>
        <end position="457"/>
    </location>
</feature>
<feature type="transmembrane region" description="Helical" evidence="1">
    <location>
        <begin position="1"/>
        <end position="21"/>
    </location>
</feature>
<feature type="transmembrane region" description="Helical" evidence="1">
    <location>
        <begin position="250"/>
        <end position="270"/>
    </location>
</feature>
<evidence type="ECO:0000255" key="1"/>
<evidence type="ECO:0000269" key="2">
    <source>
    </source>
</evidence>
<evidence type="ECO:0000305" key="3"/>
<sequence length="457" mass="52246">MVSSLASNIILALVVVLMTLLRQNKPLQRWFVSYVEKLLSRKSNLAQKVSVLSPSLKLVDVEKSISADQSNLSKINYQIPTLPDLTGNLIRLHEYRARGEGYNGLLFRRARQLNGISEDQLQKLGYFTKLMKNNEGIRENARVIDKIIEFTLGKLIHSNEHDEEFTEEIEKICAEHGYKIKDGHLIQLNPDFVFPIVSSRGSQSVVHEALAHLCRDFSSYYSVERDPLQNFIISRINHHVISAGDMKEKILIVTPGAGVGGLSHTLATTFPKIQVDSIELSALMYICNLFALEYKHDVKIRPFVQQYSCQTVFDNQLRSLSADLSKVGHRSNLDPLWGDFTRYSPISKDYDKIIICSAYFIDTAENMFEYLSSIEALKKYCKELHWVNVGPLKYGTKPLVQFTGDELSRLRKIRGWKDLVEEYEVDSSKGLNGYLTDYESMYQGYYGLLKFHSVFES</sequence>
<dbReference type="EMBL" id="Z49809">
    <property type="protein sequence ID" value="CAA89924.1"/>
    <property type="molecule type" value="Genomic_DNA"/>
</dbReference>
<dbReference type="EMBL" id="AY692616">
    <property type="protein sequence ID" value="AAT92635.1"/>
    <property type="molecule type" value="Genomic_DNA"/>
</dbReference>
<dbReference type="EMBL" id="BK006946">
    <property type="protein sequence ID" value="DAA10108.1"/>
    <property type="molecule type" value="Genomic_DNA"/>
</dbReference>
<dbReference type="PIR" id="S55091">
    <property type="entry name" value="S55091"/>
</dbReference>
<dbReference type="RefSeq" id="NP_013936.1">
    <property type="nucleotide sequence ID" value="NM_001182716.1"/>
</dbReference>
<dbReference type="SMR" id="Q03648"/>
<dbReference type="BioGRID" id="35387">
    <property type="interactions" value="47"/>
</dbReference>
<dbReference type="DIP" id="DIP-4412N"/>
<dbReference type="FunCoup" id="Q03648">
    <property type="interactions" value="74"/>
</dbReference>
<dbReference type="IntAct" id="Q03648">
    <property type="interactions" value="6"/>
</dbReference>
<dbReference type="STRING" id="4932.YMR209C"/>
<dbReference type="iPTMnet" id="Q03648"/>
<dbReference type="PaxDb" id="4932-YMR209C"/>
<dbReference type="PeptideAtlas" id="Q03648"/>
<dbReference type="EnsemblFungi" id="YMR209C_mRNA">
    <property type="protein sequence ID" value="YMR209C"/>
    <property type="gene ID" value="YMR209C"/>
</dbReference>
<dbReference type="GeneID" id="855249"/>
<dbReference type="KEGG" id="sce:YMR209C"/>
<dbReference type="AGR" id="SGD:S000004822"/>
<dbReference type="SGD" id="S000004822">
    <property type="gene designation" value="YMR209C"/>
</dbReference>
<dbReference type="VEuPathDB" id="FungiDB:YMR209C"/>
<dbReference type="eggNOG" id="KOG2798">
    <property type="taxonomic scope" value="Eukaryota"/>
</dbReference>
<dbReference type="GeneTree" id="ENSGT00390000005323"/>
<dbReference type="HOGENOM" id="CLU_030612_3_0_1"/>
<dbReference type="InParanoid" id="Q03648"/>
<dbReference type="OMA" id="SMWQGYY"/>
<dbReference type="OrthoDB" id="978at2759"/>
<dbReference type="BioCyc" id="YEAST:G3O-32892-MONOMER"/>
<dbReference type="BioGRID-ORCS" id="855249">
    <property type="hits" value="0 hits in 10 CRISPR screens"/>
</dbReference>
<dbReference type="ChiTaRS" id="YMR209C">
    <property type="organism name" value="yeast"/>
</dbReference>
<dbReference type="PRO" id="PR:Q03648"/>
<dbReference type="Proteomes" id="UP000002311">
    <property type="component" value="Chromosome XIII"/>
</dbReference>
<dbReference type="RNAct" id="Q03648">
    <property type="molecule type" value="protein"/>
</dbReference>
<dbReference type="GO" id="GO:0016020">
    <property type="term" value="C:membrane"/>
    <property type="evidence" value="ECO:0007669"/>
    <property type="project" value="UniProtKB-SubCell"/>
</dbReference>
<dbReference type="GO" id="GO:0008757">
    <property type="term" value="F:S-adenosylmethionine-dependent methyltransferase activity"/>
    <property type="evidence" value="ECO:0000255"/>
    <property type="project" value="SGD"/>
</dbReference>
<dbReference type="InterPro" id="IPR012901">
    <property type="entry name" value="CARME"/>
</dbReference>
<dbReference type="InterPro" id="IPR016853">
    <property type="entry name" value="S-AdoMet-bd_YMR209C_prd"/>
</dbReference>
<dbReference type="InterPro" id="IPR029063">
    <property type="entry name" value="SAM-dependent_MTases_sf"/>
</dbReference>
<dbReference type="PANTHER" id="PTHR12303:SF11">
    <property type="entry name" value="AER338CP"/>
    <property type="match status" value="1"/>
</dbReference>
<dbReference type="PANTHER" id="PTHR12303">
    <property type="entry name" value="CARNOSINE N-METHYLTRANSFERASE"/>
    <property type="match status" value="1"/>
</dbReference>
<dbReference type="Pfam" id="PF07942">
    <property type="entry name" value="CARME"/>
    <property type="match status" value="1"/>
</dbReference>
<dbReference type="PIRSF" id="PIRSF027174">
    <property type="entry name" value="SAM_bd_YMR209C_prd"/>
    <property type="match status" value="1"/>
</dbReference>
<dbReference type="SMART" id="SM01296">
    <property type="entry name" value="N2227"/>
    <property type="match status" value="1"/>
</dbReference>
<dbReference type="SUPFAM" id="SSF53335">
    <property type="entry name" value="S-adenosyl-L-methionine-dependent methyltransferases"/>
    <property type="match status" value="1"/>
</dbReference>
<reference key="1">
    <citation type="journal article" date="1997" name="Nature">
        <title>The nucleotide sequence of Saccharomyces cerevisiae chromosome XIII.</title>
        <authorList>
            <person name="Bowman S."/>
            <person name="Churcher C.M."/>
            <person name="Badcock K."/>
            <person name="Brown D."/>
            <person name="Chillingworth T."/>
            <person name="Connor R."/>
            <person name="Dedman K."/>
            <person name="Devlin K."/>
            <person name="Gentles S."/>
            <person name="Hamlin N."/>
            <person name="Hunt S."/>
            <person name="Jagels K."/>
            <person name="Lye G."/>
            <person name="Moule S."/>
            <person name="Odell C."/>
            <person name="Pearson D."/>
            <person name="Rajandream M.A."/>
            <person name="Rice P."/>
            <person name="Skelton J."/>
            <person name="Walsh S.V."/>
            <person name="Whitehead S."/>
            <person name="Barrell B.G."/>
        </authorList>
    </citation>
    <scope>NUCLEOTIDE SEQUENCE [LARGE SCALE GENOMIC DNA]</scope>
    <source>
        <strain>ATCC 204508 / S288c</strain>
    </source>
</reference>
<reference key="2">
    <citation type="journal article" date="2014" name="G3 (Bethesda)">
        <title>The reference genome sequence of Saccharomyces cerevisiae: Then and now.</title>
        <authorList>
            <person name="Engel S.R."/>
            <person name="Dietrich F.S."/>
            <person name="Fisk D.G."/>
            <person name="Binkley G."/>
            <person name="Balakrishnan R."/>
            <person name="Costanzo M.C."/>
            <person name="Dwight S.S."/>
            <person name="Hitz B.C."/>
            <person name="Karra K."/>
            <person name="Nash R.S."/>
            <person name="Weng S."/>
            <person name="Wong E.D."/>
            <person name="Lloyd P."/>
            <person name="Skrzypek M.S."/>
            <person name="Miyasato S.R."/>
            <person name="Simison M."/>
            <person name="Cherry J.M."/>
        </authorList>
    </citation>
    <scope>GENOME REANNOTATION</scope>
    <source>
        <strain>ATCC 204508 / S288c</strain>
    </source>
</reference>
<reference key="3">
    <citation type="journal article" date="2007" name="Genome Res.">
        <title>Approaching a complete repository of sequence-verified protein-encoding clones for Saccharomyces cerevisiae.</title>
        <authorList>
            <person name="Hu Y."/>
            <person name="Rolfs A."/>
            <person name="Bhullar B."/>
            <person name="Murthy T.V.S."/>
            <person name="Zhu C."/>
            <person name="Berger M.F."/>
            <person name="Camargo A.A."/>
            <person name="Kelley F."/>
            <person name="McCarron S."/>
            <person name="Jepson D."/>
            <person name="Richardson A."/>
            <person name="Raphael J."/>
            <person name="Moreira D."/>
            <person name="Taycher E."/>
            <person name="Zuo D."/>
            <person name="Mohr S."/>
            <person name="Kane M.F."/>
            <person name="Williamson J."/>
            <person name="Simpson A.J.G."/>
            <person name="Bulyk M.L."/>
            <person name="Harlow E."/>
            <person name="Marsischky G."/>
            <person name="Kolodner R.D."/>
            <person name="LaBaer J."/>
        </authorList>
    </citation>
    <scope>NUCLEOTIDE SEQUENCE [GENOMIC DNA]</scope>
    <source>
        <strain>ATCC 204508 / S288c</strain>
    </source>
</reference>
<reference key="4">
    <citation type="journal article" date="2003" name="Nature">
        <title>Global analysis of protein expression in yeast.</title>
        <authorList>
            <person name="Ghaemmaghami S."/>
            <person name="Huh W.-K."/>
            <person name="Bower K."/>
            <person name="Howson R.W."/>
            <person name="Belle A."/>
            <person name="Dephoure N."/>
            <person name="O'Shea E.K."/>
            <person name="Weissman J.S."/>
        </authorList>
    </citation>
    <scope>LEVEL OF PROTEIN EXPRESSION [LARGE SCALE ANALYSIS]</scope>
</reference>
<proteinExistence type="evidence at protein level"/>
<accession>Q03648</accession>
<accession>D6W034</accession>